<proteinExistence type="evidence at protein level"/>
<feature type="chain" id="PRO_1000192278" description="Nucleoside diphosphate kinase">
    <location>
        <begin position="1"/>
        <end position="141"/>
    </location>
</feature>
<feature type="active site" description="Pros-phosphohistidine intermediate" evidence="1">
    <location>
        <position position="117"/>
    </location>
</feature>
<feature type="binding site" evidence="1">
    <location>
        <position position="11"/>
    </location>
    <ligand>
        <name>ATP</name>
        <dbReference type="ChEBI" id="CHEBI:30616"/>
    </ligand>
</feature>
<feature type="binding site" evidence="1">
    <location>
        <position position="59"/>
    </location>
    <ligand>
        <name>ATP</name>
        <dbReference type="ChEBI" id="CHEBI:30616"/>
    </ligand>
</feature>
<feature type="binding site" evidence="1">
    <location>
        <position position="87"/>
    </location>
    <ligand>
        <name>ATP</name>
        <dbReference type="ChEBI" id="CHEBI:30616"/>
    </ligand>
</feature>
<feature type="binding site" evidence="1">
    <location>
        <position position="93"/>
    </location>
    <ligand>
        <name>ATP</name>
        <dbReference type="ChEBI" id="CHEBI:30616"/>
    </ligand>
</feature>
<feature type="binding site" evidence="1">
    <location>
        <position position="104"/>
    </location>
    <ligand>
        <name>ATP</name>
        <dbReference type="ChEBI" id="CHEBI:30616"/>
    </ligand>
</feature>
<feature type="binding site" evidence="1">
    <location>
        <position position="114"/>
    </location>
    <ligand>
        <name>ATP</name>
        <dbReference type="ChEBI" id="CHEBI:30616"/>
    </ligand>
</feature>
<feature type="strand" evidence="2">
    <location>
        <begin position="3"/>
        <end position="10"/>
    </location>
</feature>
<feature type="helix" evidence="2">
    <location>
        <begin position="12"/>
        <end position="16"/>
    </location>
</feature>
<feature type="helix" evidence="2">
    <location>
        <begin position="20"/>
        <end position="28"/>
    </location>
</feature>
<feature type="turn" evidence="2">
    <location>
        <begin position="29"/>
        <end position="31"/>
    </location>
</feature>
<feature type="strand" evidence="2">
    <location>
        <begin position="33"/>
        <end position="40"/>
    </location>
</feature>
<feature type="helix" evidence="2">
    <location>
        <begin position="44"/>
        <end position="50"/>
    </location>
</feature>
<feature type="helix" evidence="2">
    <location>
        <begin position="52"/>
        <end position="54"/>
    </location>
</feature>
<feature type="helix" evidence="2">
    <location>
        <begin position="60"/>
        <end position="68"/>
    </location>
</feature>
<feature type="strand" evidence="2">
    <location>
        <begin position="72"/>
        <end position="80"/>
    </location>
</feature>
<feature type="helix" evidence="2">
    <location>
        <begin position="82"/>
        <end position="90"/>
    </location>
</feature>
<feature type="turn" evidence="2">
    <location>
        <begin position="95"/>
        <end position="97"/>
    </location>
</feature>
<feature type="helix" evidence="2">
    <location>
        <begin position="103"/>
        <end position="107"/>
    </location>
</feature>
<feature type="strand" evidence="2">
    <location>
        <begin position="110"/>
        <end position="113"/>
    </location>
</feature>
<feature type="strand" evidence="2">
    <location>
        <begin position="115"/>
        <end position="118"/>
    </location>
</feature>
<feature type="helix" evidence="2">
    <location>
        <begin position="122"/>
        <end position="132"/>
    </location>
</feature>
<feature type="helix" evidence="2">
    <location>
        <begin position="135"/>
        <end position="137"/>
    </location>
</feature>
<comment type="function">
    <text evidence="1">Major role in the synthesis of nucleoside triphosphates other than ATP. The ATP gamma phosphate is transferred to the NDP beta phosphate via a ping-pong mechanism, using a phosphorylated active-site intermediate.</text>
</comment>
<comment type="catalytic activity">
    <reaction evidence="1">
        <text>a 2'-deoxyribonucleoside 5'-diphosphate + ATP = a 2'-deoxyribonucleoside 5'-triphosphate + ADP</text>
        <dbReference type="Rhea" id="RHEA:44640"/>
        <dbReference type="ChEBI" id="CHEBI:30616"/>
        <dbReference type="ChEBI" id="CHEBI:61560"/>
        <dbReference type="ChEBI" id="CHEBI:73316"/>
        <dbReference type="ChEBI" id="CHEBI:456216"/>
        <dbReference type="EC" id="2.7.4.6"/>
    </reaction>
</comment>
<comment type="catalytic activity">
    <reaction evidence="1">
        <text>a ribonucleoside 5'-diphosphate + ATP = a ribonucleoside 5'-triphosphate + ADP</text>
        <dbReference type="Rhea" id="RHEA:18113"/>
        <dbReference type="ChEBI" id="CHEBI:30616"/>
        <dbReference type="ChEBI" id="CHEBI:57930"/>
        <dbReference type="ChEBI" id="CHEBI:61557"/>
        <dbReference type="ChEBI" id="CHEBI:456216"/>
        <dbReference type="EC" id="2.7.4.6"/>
    </reaction>
</comment>
<comment type="cofactor">
    <cofactor evidence="1">
        <name>Mg(2+)</name>
        <dbReference type="ChEBI" id="CHEBI:18420"/>
    </cofactor>
</comment>
<comment type="subunit">
    <text evidence="1">Homotetramer.</text>
</comment>
<comment type="subcellular location">
    <subcellularLocation>
        <location evidence="1">Cytoplasm</location>
    </subcellularLocation>
</comment>
<comment type="similarity">
    <text evidence="1">Belongs to the NDK family.</text>
</comment>
<evidence type="ECO:0000255" key="1">
    <source>
        <dbReference type="HAMAP-Rule" id="MF_00451"/>
    </source>
</evidence>
<evidence type="ECO:0007829" key="2">
    <source>
        <dbReference type="PDB" id="5V6D"/>
    </source>
</evidence>
<name>NDK_NEIG2</name>
<keyword id="KW-0002">3D-structure</keyword>
<keyword id="KW-0067">ATP-binding</keyword>
<keyword id="KW-0963">Cytoplasm</keyword>
<keyword id="KW-0418">Kinase</keyword>
<keyword id="KW-0460">Magnesium</keyword>
<keyword id="KW-0479">Metal-binding</keyword>
<keyword id="KW-0546">Nucleotide metabolism</keyword>
<keyword id="KW-0547">Nucleotide-binding</keyword>
<keyword id="KW-0597">Phosphoprotein</keyword>
<keyword id="KW-0808">Transferase</keyword>
<protein>
    <recommendedName>
        <fullName evidence="1">Nucleoside diphosphate kinase</fullName>
        <shortName evidence="1">NDK</shortName>
        <shortName evidence="1">NDP kinase</shortName>
        <ecNumber evidence="1">2.7.4.6</ecNumber>
    </recommendedName>
    <alternativeName>
        <fullName evidence="1">Nucleoside-2-P kinase</fullName>
    </alternativeName>
</protein>
<accession>B4RMG0</accession>
<sequence length="141" mass="15441">MAIERTISIIKPDAVGKNVIGKIYSRFEENGLKIVAAKMKQLTLKEAQEFYAVHKDRPFYAGLVEFMTGGPVMIQVLEGENAVLKNRELMGATNPTEAAEGTIRADFATSVSINAVHGSDSVENAALEIAYFFSQTEICPR</sequence>
<organism>
    <name type="scientific">Neisseria gonorrhoeae (strain NCCP11945)</name>
    <dbReference type="NCBI Taxonomy" id="521006"/>
    <lineage>
        <taxon>Bacteria</taxon>
        <taxon>Pseudomonadati</taxon>
        <taxon>Pseudomonadota</taxon>
        <taxon>Betaproteobacteria</taxon>
        <taxon>Neisseriales</taxon>
        <taxon>Neisseriaceae</taxon>
        <taxon>Neisseria</taxon>
    </lineage>
</organism>
<gene>
    <name evidence="1" type="primary">ndk</name>
    <name type="ordered locus">NGK_1320</name>
</gene>
<dbReference type="EC" id="2.7.4.6" evidence="1"/>
<dbReference type="EMBL" id="CP001050">
    <property type="protein sequence ID" value="ACF29995.1"/>
    <property type="molecule type" value="Genomic_DNA"/>
</dbReference>
<dbReference type="RefSeq" id="WP_003688947.1">
    <property type="nucleotide sequence ID" value="NC_011035.1"/>
</dbReference>
<dbReference type="PDB" id="5V6D">
    <property type="method" value="X-ray"/>
    <property type="resolution" value="1.85 A"/>
    <property type="chains" value="A/B/C/D/E/F/G/H/I/J/K/L/M/N/O/P=1-141"/>
</dbReference>
<dbReference type="PDBsum" id="5V6D"/>
<dbReference type="SMR" id="B4RMG0"/>
<dbReference type="GeneID" id="66752936"/>
<dbReference type="KEGG" id="ngk:NGK_1320"/>
<dbReference type="HOGENOM" id="CLU_060216_8_1_4"/>
<dbReference type="BRENDA" id="2.7.4.6">
    <property type="organism ID" value="3590"/>
</dbReference>
<dbReference type="Proteomes" id="UP000002564">
    <property type="component" value="Chromosome"/>
</dbReference>
<dbReference type="GO" id="GO:0005737">
    <property type="term" value="C:cytoplasm"/>
    <property type="evidence" value="ECO:0007669"/>
    <property type="project" value="UniProtKB-SubCell"/>
</dbReference>
<dbReference type="GO" id="GO:0005524">
    <property type="term" value="F:ATP binding"/>
    <property type="evidence" value="ECO:0007669"/>
    <property type="project" value="UniProtKB-UniRule"/>
</dbReference>
<dbReference type="GO" id="GO:0046872">
    <property type="term" value="F:metal ion binding"/>
    <property type="evidence" value="ECO:0007669"/>
    <property type="project" value="UniProtKB-KW"/>
</dbReference>
<dbReference type="GO" id="GO:0004550">
    <property type="term" value="F:nucleoside diphosphate kinase activity"/>
    <property type="evidence" value="ECO:0007669"/>
    <property type="project" value="UniProtKB-UniRule"/>
</dbReference>
<dbReference type="GO" id="GO:0006241">
    <property type="term" value="P:CTP biosynthetic process"/>
    <property type="evidence" value="ECO:0007669"/>
    <property type="project" value="UniProtKB-UniRule"/>
</dbReference>
<dbReference type="GO" id="GO:0006183">
    <property type="term" value="P:GTP biosynthetic process"/>
    <property type="evidence" value="ECO:0007669"/>
    <property type="project" value="UniProtKB-UniRule"/>
</dbReference>
<dbReference type="GO" id="GO:0006228">
    <property type="term" value="P:UTP biosynthetic process"/>
    <property type="evidence" value="ECO:0007669"/>
    <property type="project" value="UniProtKB-UniRule"/>
</dbReference>
<dbReference type="CDD" id="cd04413">
    <property type="entry name" value="NDPk_I"/>
    <property type="match status" value="1"/>
</dbReference>
<dbReference type="FunFam" id="3.30.70.141:FF:000001">
    <property type="entry name" value="Nucleoside diphosphate kinase"/>
    <property type="match status" value="1"/>
</dbReference>
<dbReference type="Gene3D" id="3.30.70.141">
    <property type="entry name" value="Nucleoside diphosphate kinase-like domain"/>
    <property type="match status" value="1"/>
</dbReference>
<dbReference type="HAMAP" id="MF_00451">
    <property type="entry name" value="NDP_kinase"/>
    <property type="match status" value="1"/>
</dbReference>
<dbReference type="InterPro" id="IPR034907">
    <property type="entry name" value="NDK-like_dom"/>
</dbReference>
<dbReference type="InterPro" id="IPR036850">
    <property type="entry name" value="NDK-like_dom_sf"/>
</dbReference>
<dbReference type="InterPro" id="IPR001564">
    <property type="entry name" value="Nucleoside_diP_kinase"/>
</dbReference>
<dbReference type="InterPro" id="IPR023005">
    <property type="entry name" value="Nucleoside_diP_kinase_AS"/>
</dbReference>
<dbReference type="NCBIfam" id="NF001908">
    <property type="entry name" value="PRK00668.1"/>
    <property type="match status" value="1"/>
</dbReference>
<dbReference type="PANTHER" id="PTHR11349">
    <property type="entry name" value="NUCLEOSIDE DIPHOSPHATE KINASE"/>
    <property type="match status" value="1"/>
</dbReference>
<dbReference type="Pfam" id="PF00334">
    <property type="entry name" value="NDK"/>
    <property type="match status" value="1"/>
</dbReference>
<dbReference type="PRINTS" id="PR01243">
    <property type="entry name" value="NUCDPKINASE"/>
</dbReference>
<dbReference type="SMART" id="SM00562">
    <property type="entry name" value="NDK"/>
    <property type="match status" value="1"/>
</dbReference>
<dbReference type="SUPFAM" id="SSF54919">
    <property type="entry name" value="Nucleoside diphosphate kinase, NDK"/>
    <property type="match status" value="1"/>
</dbReference>
<dbReference type="PROSITE" id="PS00469">
    <property type="entry name" value="NDPK"/>
    <property type="match status" value="1"/>
</dbReference>
<dbReference type="PROSITE" id="PS51374">
    <property type="entry name" value="NDPK_LIKE"/>
    <property type="match status" value="1"/>
</dbReference>
<reference key="1">
    <citation type="journal article" date="2008" name="J. Bacteriol.">
        <title>Complete genome sequence of Neisseria gonorrhoeae NCCP11945.</title>
        <authorList>
            <person name="Chung G.T."/>
            <person name="Yoo J.S."/>
            <person name="Oh H.B."/>
            <person name="Lee Y.S."/>
            <person name="Cha S.H."/>
            <person name="Kim S.J."/>
            <person name="Yoo C.K."/>
        </authorList>
    </citation>
    <scope>NUCLEOTIDE SEQUENCE [LARGE SCALE GENOMIC DNA]</scope>
    <source>
        <strain>NCCP11945</strain>
    </source>
</reference>